<evidence type="ECO:0000250" key="1">
    <source>
        <dbReference type="UniProtKB" id="P56778"/>
    </source>
</evidence>
<evidence type="ECO:0000255" key="2">
    <source>
        <dbReference type="HAMAP-Rule" id="MF_01496"/>
    </source>
</evidence>
<proteinExistence type="inferred from homology"/>
<sequence>MKTLYSLRRFYHVETLFNGTLALAGRDQETTGFAWWAGNARLINLSGKLLGAHVAHAGLIVFWAGAMNLFEVAHFVPEKPMYEQGLILLPHLATLGWGVGPGGEVIDTFPYFVSGVLHLISSAVLGFGGIYHALLGPETLEESFPFFGYVWKDRNKMTTILGIHLILLGVGAFLLVFKALYFGGVYDTWAPGGGDVRKITNLTLSPSVIFGYLLKSPFGGEGWIVSVDDLEDIIGGHVWLGSICIFGGIWHILTKPFAWARRALVWSGEAYLSYSLAALSVCGFIACCFVWFNNTAYPSEFYGPTGPEASQAQAFTFLVRDQRLGANVGSAQGPTGLGKYLMRSPTGEVIFGGETMRFWDLRAPWLEPLRGPNGLDLSRLKKDIQPWQERRSAEYMTHAPLGSLNSVGGVATEINAVNYVSPRSWLSTSHFVLGFFLFVGHLWHAGRARAAAAGFEKGIDRDFEPVLSMTPLN</sequence>
<name>PSBC_NASOF</name>
<protein>
    <recommendedName>
        <fullName evidence="2">Photosystem II CP43 reaction center protein</fullName>
    </recommendedName>
    <alternativeName>
        <fullName evidence="2">PSII 43 kDa protein</fullName>
    </alternativeName>
    <alternativeName>
        <fullName evidence="2">Protein CP-43</fullName>
    </alternativeName>
</protein>
<accession>A4QLS9</accession>
<keyword id="KW-0007">Acetylation</keyword>
<keyword id="KW-0148">Chlorophyll</keyword>
<keyword id="KW-0150">Chloroplast</keyword>
<keyword id="KW-0157">Chromophore</keyword>
<keyword id="KW-0464">Manganese</keyword>
<keyword id="KW-0472">Membrane</keyword>
<keyword id="KW-0479">Metal-binding</keyword>
<keyword id="KW-0597">Phosphoprotein</keyword>
<keyword id="KW-0602">Photosynthesis</keyword>
<keyword id="KW-0604">Photosystem II</keyword>
<keyword id="KW-0934">Plastid</keyword>
<keyword id="KW-0793">Thylakoid</keyword>
<keyword id="KW-0812">Transmembrane</keyword>
<keyword id="KW-1133">Transmembrane helix</keyword>
<organism>
    <name type="scientific">Nasturtium officinale</name>
    <name type="common">Watercress</name>
    <name type="synonym">Rorippa nasturtium-aquaticum</name>
    <dbReference type="NCBI Taxonomy" id="65948"/>
    <lineage>
        <taxon>Eukaryota</taxon>
        <taxon>Viridiplantae</taxon>
        <taxon>Streptophyta</taxon>
        <taxon>Embryophyta</taxon>
        <taxon>Tracheophyta</taxon>
        <taxon>Spermatophyta</taxon>
        <taxon>Magnoliopsida</taxon>
        <taxon>eudicotyledons</taxon>
        <taxon>Gunneridae</taxon>
        <taxon>Pentapetalae</taxon>
        <taxon>rosids</taxon>
        <taxon>malvids</taxon>
        <taxon>Brassicales</taxon>
        <taxon>Brassicaceae</taxon>
        <taxon>Cardamineae</taxon>
        <taxon>Nasturtium</taxon>
    </lineage>
</organism>
<reference key="1">
    <citation type="submission" date="2007-03" db="EMBL/GenBank/DDBJ databases">
        <title>Sequencing analysis of Nasturtium officinale chloroplast DNA.</title>
        <authorList>
            <person name="Hosouchi T."/>
            <person name="Tsuruoka H."/>
            <person name="Kotani H."/>
        </authorList>
    </citation>
    <scope>NUCLEOTIDE SEQUENCE [LARGE SCALE GENOMIC DNA]</scope>
</reference>
<comment type="function">
    <text evidence="2">One of the components of the core complex of photosystem II (PSII). It binds chlorophyll and helps catalyze the primary light-induced photochemical processes of PSII. PSII is a light-driven water:plastoquinone oxidoreductase, using light energy to abstract electrons from H(2)O, generating O(2) and a proton gradient subsequently used for ATP formation.</text>
</comment>
<comment type="cofactor">
    <text evidence="2">Binds multiple chlorophylls and provides some of the ligands for the Ca-4Mn-5O cluster of the oxygen-evolving complex. It may also provide a ligand for a Cl- that is required for oxygen evolution. PSII binds additional chlorophylls, carotenoids and specific lipids.</text>
</comment>
<comment type="subunit">
    <text evidence="2">PSII is composed of 1 copy each of membrane proteins PsbA, PsbB, PsbC, PsbD, PsbE, PsbF, PsbH, PsbI, PsbJ, PsbK, PsbL, PsbM, PsbT, PsbX, PsbY, PsbZ, Psb30/Ycf12, at least 3 peripheral proteins of the oxygen-evolving complex and a large number of cofactors. It forms dimeric complexes.</text>
</comment>
<comment type="subcellular location">
    <subcellularLocation>
        <location evidence="2">Plastid</location>
        <location evidence="2">Chloroplast thylakoid membrane</location>
        <topology evidence="2">Multi-pass membrane protein</topology>
    </subcellularLocation>
</comment>
<comment type="similarity">
    <text evidence="2">Belongs to the PsbB/PsbC family. PsbC subfamily.</text>
</comment>
<feature type="propeptide" id="PRO_0000431169" evidence="2">
    <location>
        <begin position="1"/>
        <end position="14"/>
    </location>
</feature>
<feature type="chain" id="PRO_0000361427" description="Photosystem II CP43 reaction center protein" evidence="2">
    <location>
        <begin position="15"/>
        <end position="473"/>
    </location>
</feature>
<feature type="transmembrane region" description="Helical" evidence="2">
    <location>
        <begin position="69"/>
        <end position="93"/>
    </location>
</feature>
<feature type="transmembrane region" description="Helical" evidence="2">
    <location>
        <begin position="134"/>
        <end position="155"/>
    </location>
</feature>
<feature type="transmembrane region" description="Helical" evidence="2">
    <location>
        <begin position="178"/>
        <end position="200"/>
    </location>
</feature>
<feature type="transmembrane region" description="Helical" evidence="2">
    <location>
        <begin position="255"/>
        <end position="275"/>
    </location>
</feature>
<feature type="transmembrane region" description="Helical" evidence="2">
    <location>
        <begin position="291"/>
        <end position="312"/>
    </location>
</feature>
<feature type="transmembrane region" description="Helical" evidence="2">
    <location>
        <begin position="447"/>
        <end position="471"/>
    </location>
</feature>
<feature type="binding site" evidence="2">
    <location>
        <position position="367"/>
    </location>
    <ligand>
        <name>[CaMn4O5] cluster</name>
        <dbReference type="ChEBI" id="CHEBI:189552"/>
    </ligand>
</feature>
<feature type="modified residue" description="N-acetylthreonine" evidence="1 2">
    <location>
        <position position="15"/>
    </location>
</feature>
<feature type="modified residue" description="Phosphothreonine" evidence="1 2">
    <location>
        <position position="15"/>
    </location>
</feature>
<dbReference type="EMBL" id="AP009376">
    <property type="protein sequence ID" value="BAF50634.1"/>
    <property type="molecule type" value="Genomic_DNA"/>
</dbReference>
<dbReference type="RefSeq" id="YP_001123810.1">
    <property type="nucleotide sequence ID" value="NC_009275.1"/>
</dbReference>
<dbReference type="SMR" id="A4QLS9"/>
<dbReference type="GeneID" id="4962169"/>
<dbReference type="GO" id="GO:0009535">
    <property type="term" value="C:chloroplast thylakoid membrane"/>
    <property type="evidence" value="ECO:0007669"/>
    <property type="project" value="UniProtKB-SubCell"/>
</dbReference>
<dbReference type="GO" id="GO:0009523">
    <property type="term" value="C:photosystem II"/>
    <property type="evidence" value="ECO:0007669"/>
    <property type="project" value="UniProtKB-KW"/>
</dbReference>
<dbReference type="GO" id="GO:0016168">
    <property type="term" value="F:chlorophyll binding"/>
    <property type="evidence" value="ECO:0007669"/>
    <property type="project" value="UniProtKB-UniRule"/>
</dbReference>
<dbReference type="GO" id="GO:0045156">
    <property type="term" value="F:electron transporter, transferring electrons within the cyclic electron transport pathway of photosynthesis activity"/>
    <property type="evidence" value="ECO:0007669"/>
    <property type="project" value="InterPro"/>
</dbReference>
<dbReference type="GO" id="GO:0046872">
    <property type="term" value="F:metal ion binding"/>
    <property type="evidence" value="ECO:0007669"/>
    <property type="project" value="UniProtKB-KW"/>
</dbReference>
<dbReference type="GO" id="GO:0009772">
    <property type="term" value="P:photosynthetic electron transport in photosystem II"/>
    <property type="evidence" value="ECO:0007669"/>
    <property type="project" value="InterPro"/>
</dbReference>
<dbReference type="FunFam" id="1.10.10.670:FF:000001">
    <property type="entry name" value="Photosystem II CP43 reaction center protein"/>
    <property type="match status" value="1"/>
</dbReference>
<dbReference type="Gene3D" id="1.10.10.670">
    <property type="entry name" value="photosystem ii from thermosynechococcus elongatus"/>
    <property type="match status" value="1"/>
</dbReference>
<dbReference type="HAMAP" id="MF_01496">
    <property type="entry name" value="PSII_PsbC_CP43"/>
    <property type="match status" value="1"/>
</dbReference>
<dbReference type="InterPro" id="IPR000932">
    <property type="entry name" value="PS_antenna-like"/>
</dbReference>
<dbReference type="InterPro" id="IPR036001">
    <property type="entry name" value="PS_II_antenna-like_sf"/>
</dbReference>
<dbReference type="InterPro" id="IPR005869">
    <property type="entry name" value="PSII_PsbC"/>
</dbReference>
<dbReference type="InterPro" id="IPR044900">
    <property type="entry name" value="PSII_PsbC_sf"/>
</dbReference>
<dbReference type="NCBIfam" id="TIGR01153">
    <property type="entry name" value="psbC"/>
    <property type="match status" value="1"/>
</dbReference>
<dbReference type="Pfam" id="PF00421">
    <property type="entry name" value="PSII"/>
    <property type="match status" value="1"/>
</dbReference>
<dbReference type="SUPFAM" id="SSF161077">
    <property type="entry name" value="Photosystem II antenna protein-like"/>
    <property type="match status" value="1"/>
</dbReference>
<gene>
    <name evidence="2" type="primary">psbC</name>
</gene>
<geneLocation type="chloroplast"/>